<evidence type="ECO:0000305" key="1"/>
<feature type="chain" id="PRO_0000299589" description="Putative uncharacterized protein ycf15">
    <location>
        <begin position="1"/>
        <end position="99"/>
    </location>
</feature>
<name>YCF15_SACHY</name>
<dbReference type="EMBL" id="AE009947">
    <property type="protein sequence ID" value="AAT44641.1"/>
    <property type="molecule type" value="Genomic_DNA"/>
</dbReference>
<dbReference type="EMBL" id="AE009947">
    <property type="protein sequence ID" value="AAT44668.1"/>
    <property type="molecule type" value="Genomic_DNA"/>
</dbReference>
<dbReference type="GO" id="GO:0009507">
    <property type="term" value="C:chloroplast"/>
    <property type="evidence" value="ECO:0007669"/>
    <property type="project" value="UniProtKB-SubCell"/>
</dbReference>
<dbReference type="InterPro" id="IPR019645">
    <property type="entry name" value="Uncharacterised_Ycf15"/>
</dbReference>
<dbReference type="Pfam" id="PF10705">
    <property type="entry name" value="Ycf15"/>
    <property type="match status" value="1"/>
</dbReference>
<keyword id="KW-0150">Chloroplast</keyword>
<keyword id="KW-0934">Plastid</keyword>
<protein>
    <recommendedName>
        <fullName>Putative uncharacterized protein ycf15</fullName>
    </recommendedName>
</protein>
<sequence>MLIVLFRSKDIRGGRFVRPILIFRTKRSWILFRIGPERRREAEMPTDLCLFSNSPDPIVPVFGTSSAKVTEWVSHQSNPFDKSGVILDIIFYIYRNIIE</sequence>
<accession>Q6L3C4</accession>
<proteinExistence type="uncertain"/>
<geneLocation type="chloroplast"/>
<comment type="subcellular location">
    <subcellularLocation>
        <location>Plastid</location>
        <location>Chloroplast</location>
    </subcellularLocation>
</comment>
<comment type="similarity">
    <text evidence="1">Belongs to the ycf15 family.</text>
</comment>
<comment type="caution">
    <text evidence="1">Could be the product of a pseudogene.</text>
</comment>
<reference key="1">
    <citation type="journal article" date="2004" name="Curr. Genet.">
        <title>Structural features and transcript-editing analysis of sugarcane (Saccharum officinarum L.) chloroplast genome.</title>
        <authorList>
            <person name="Calsa T. Jr."/>
            <person name="Carraro D.M."/>
            <person name="Benatti M.R."/>
            <person name="Barbosa A.C."/>
            <person name="Kitajima J.P."/>
            <person name="Carrer H."/>
        </authorList>
    </citation>
    <scope>NUCLEOTIDE SEQUENCE [LARGE SCALE GENOMIC DNA]</scope>
    <source>
        <strain>cv. SP-80-3280</strain>
    </source>
</reference>
<gene>
    <name type="primary">ycf15-A</name>
    <name type="ordered locus">PS017</name>
</gene>
<gene>
    <name type="primary">ycf15-B</name>
    <name type="ordered locus">PS069</name>
</gene>
<organism>
    <name type="scientific">Saccharum hybrid</name>
    <name type="common">Sugarcane</name>
    <dbReference type="NCBI Taxonomy" id="15819"/>
    <lineage>
        <taxon>Eukaryota</taxon>
        <taxon>Viridiplantae</taxon>
        <taxon>Streptophyta</taxon>
        <taxon>Embryophyta</taxon>
        <taxon>Tracheophyta</taxon>
        <taxon>Spermatophyta</taxon>
        <taxon>Magnoliopsida</taxon>
        <taxon>Liliopsida</taxon>
        <taxon>Poales</taxon>
        <taxon>Poaceae</taxon>
        <taxon>PACMAD clade</taxon>
        <taxon>Panicoideae</taxon>
        <taxon>Andropogonodae</taxon>
        <taxon>Andropogoneae</taxon>
        <taxon>Saccharinae</taxon>
        <taxon>Saccharum</taxon>
    </lineage>
</organism>